<evidence type="ECO:0000250" key="1">
    <source>
        <dbReference type="UniProtKB" id="E1QU22"/>
    </source>
</evidence>
<evidence type="ECO:0000255" key="2">
    <source>
        <dbReference type="HAMAP-Rule" id="MF_01116"/>
    </source>
</evidence>
<evidence type="ECO:0000305" key="3"/>
<comment type="function">
    <text evidence="2">Aminocarboxypropyltransferase that catalyzes the aminocarboxypropyl transfer on pseudouridine corresponding to position 914 in M.jannaschii 16S rRNA. It constitutes the last step in biosynthesis of the hypermodified N1-methyl-N3-(3-amino-3-carboxypropyl) pseudouridine (m1acp3-Psi).</text>
</comment>
<comment type="catalytic activity">
    <reaction evidence="2">
        <text>an N(1)-methylpseudouridine in rRNA + S-adenosyl-L-methionine = N(1)-methyl-N(3)-[(3S)-3-amino-3-carboxypropyl]pseudouridine in rRNA + S-methyl-5'-thioadenosine + H(+)</text>
        <dbReference type="Rhea" id="RHEA:63296"/>
        <dbReference type="Rhea" id="RHEA-COMP:11634"/>
        <dbReference type="Rhea" id="RHEA-COMP:16310"/>
        <dbReference type="ChEBI" id="CHEBI:15378"/>
        <dbReference type="ChEBI" id="CHEBI:17509"/>
        <dbReference type="ChEBI" id="CHEBI:59789"/>
        <dbReference type="ChEBI" id="CHEBI:74890"/>
        <dbReference type="ChEBI" id="CHEBI:146234"/>
        <dbReference type="EC" id="2.5.1.157"/>
    </reaction>
</comment>
<comment type="subcellular location">
    <subcellularLocation>
        <location evidence="2">Cytoplasm</location>
    </subcellularLocation>
</comment>
<comment type="similarity">
    <text evidence="2">Belongs to the TDD superfamily. TSR3 family.</text>
</comment>
<name>TSR3_METS3</name>
<gene>
    <name type="ordered locus">Msm_0126</name>
</gene>
<keyword id="KW-0963">Cytoplasm</keyword>
<keyword id="KW-0690">Ribosome biogenesis</keyword>
<keyword id="KW-0698">rRNA processing</keyword>
<keyword id="KW-0949">S-adenosyl-L-methionine</keyword>
<keyword id="KW-0808">Transferase</keyword>
<sequence>MKVTVFHANECDRKKCTSIKMEKLGKCKLVYNINKIPSGAVVLNPFAQKAVSYEDYRYVHRRGVVGLDCSWNEVSSSKKFFSLSKYHRSLPFLIATNPVNYGKPCILSTVEAVSATLYITRFKDEAKDILDGFKWGHTFLELNHDLLEAYSEADTSKDVVRVQNEFLESKE</sequence>
<dbReference type="EC" id="2.5.1.157" evidence="2"/>
<dbReference type="EMBL" id="CP000678">
    <property type="protein sequence ID" value="ABQ86331.1"/>
    <property type="molecule type" value="Genomic_DNA"/>
</dbReference>
<dbReference type="RefSeq" id="WP_004034082.1">
    <property type="nucleotide sequence ID" value="NZ_CP117965.1"/>
</dbReference>
<dbReference type="SMR" id="A5UJF3"/>
<dbReference type="STRING" id="420247.Msm_0126"/>
<dbReference type="EnsemblBacteria" id="ABQ86331">
    <property type="protein sequence ID" value="ABQ86331"/>
    <property type="gene ID" value="Msm_0126"/>
</dbReference>
<dbReference type="KEGG" id="msi:Msm_0126"/>
<dbReference type="PATRIC" id="fig|420247.28.peg.130"/>
<dbReference type="eggNOG" id="arCOG04733">
    <property type="taxonomic scope" value="Archaea"/>
</dbReference>
<dbReference type="HOGENOM" id="CLU_035060_4_2_2"/>
<dbReference type="BioCyc" id="MSMI420247:GHWZ-127-MONOMER"/>
<dbReference type="Proteomes" id="UP000001992">
    <property type="component" value="Chromosome"/>
</dbReference>
<dbReference type="GO" id="GO:0005737">
    <property type="term" value="C:cytoplasm"/>
    <property type="evidence" value="ECO:0007669"/>
    <property type="project" value="UniProtKB-SubCell"/>
</dbReference>
<dbReference type="GO" id="GO:0106388">
    <property type="term" value="F:18S rRNA aminocarboxypropyltransferase activity"/>
    <property type="evidence" value="ECO:0007669"/>
    <property type="project" value="InterPro"/>
</dbReference>
<dbReference type="GO" id="GO:1904047">
    <property type="term" value="F:S-adenosyl-L-methionine binding"/>
    <property type="evidence" value="ECO:0007669"/>
    <property type="project" value="UniProtKB-UniRule"/>
</dbReference>
<dbReference type="GO" id="GO:0000455">
    <property type="term" value="P:enzyme-directed rRNA pseudouridine synthesis"/>
    <property type="evidence" value="ECO:0007669"/>
    <property type="project" value="UniProtKB-UniRule"/>
</dbReference>
<dbReference type="HAMAP" id="MF_01116">
    <property type="entry name" value="TSR3"/>
    <property type="match status" value="1"/>
</dbReference>
<dbReference type="InterPro" id="IPR022968">
    <property type="entry name" value="Tsr3-like"/>
</dbReference>
<dbReference type="InterPro" id="IPR007177">
    <property type="entry name" value="Tsr3_C"/>
</dbReference>
<dbReference type="NCBIfam" id="NF002621">
    <property type="entry name" value="PRK02287.1"/>
    <property type="match status" value="1"/>
</dbReference>
<dbReference type="PANTHER" id="PTHR20426:SF0">
    <property type="entry name" value="18S RRNA AMINOCARBOXYPROPYLTRANSFERASE"/>
    <property type="match status" value="1"/>
</dbReference>
<dbReference type="PANTHER" id="PTHR20426">
    <property type="entry name" value="RIBOSOME BIOGENESIS PROTEIN TSR3 HOMOLOG"/>
    <property type="match status" value="1"/>
</dbReference>
<dbReference type="Pfam" id="PF04034">
    <property type="entry name" value="Ribo_biogen_C"/>
    <property type="match status" value="1"/>
</dbReference>
<feature type="chain" id="PRO_1000065241" description="16S rRNA aminocarboxypropyltransferase">
    <location>
        <begin position="1"/>
        <end position="171"/>
    </location>
</feature>
<feature type="binding site" evidence="1 2">
    <location>
        <position position="17"/>
    </location>
    <ligand>
        <name>S-adenosyl-L-methionine</name>
        <dbReference type="ChEBI" id="CHEBI:59789"/>
    </ligand>
</feature>
<feature type="binding site" evidence="2">
    <location>
        <position position="67"/>
    </location>
    <ligand>
        <name>S-adenosyl-L-methionine</name>
        <dbReference type="ChEBI" id="CHEBI:59789"/>
    </ligand>
</feature>
<feature type="binding site" evidence="1 2">
    <location>
        <position position="90"/>
    </location>
    <ligand>
        <name>S-adenosyl-L-methionine</name>
        <dbReference type="ChEBI" id="CHEBI:59789"/>
    </ligand>
</feature>
<feature type="binding site" evidence="1 2">
    <location>
        <position position="109"/>
    </location>
    <ligand>
        <name>S-adenosyl-L-methionine</name>
        <dbReference type="ChEBI" id="CHEBI:59789"/>
    </ligand>
</feature>
<accession>A5UJF3</accession>
<organism>
    <name type="scientific">Methanobrevibacter smithii (strain ATCC 35061 / DSM 861 / OCM 144 / PS)</name>
    <dbReference type="NCBI Taxonomy" id="420247"/>
    <lineage>
        <taxon>Archaea</taxon>
        <taxon>Methanobacteriati</taxon>
        <taxon>Methanobacteriota</taxon>
        <taxon>Methanomada group</taxon>
        <taxon>Methanobacteria</taxon>
        <taxon>Methanobacteriales</taxon>
        <taxon>Methanobacteriaceae</taxon>
        <taxon>Methanobrevibacter</taxon>
    </lineage>
</organism>
<protein>
    <recommendedName>
        <fullName evidence="2 3">16S rRNA aminocarboxypropyltransferase</fullName>
        <ecNumber evidence="2">2.5.1.157</ecNumber>
    </recommendedName>
</protein>
<proteinExistence type="inferred from homology"/>
<reference key="1">
    <citation type="journal article" date="2007" name="Proc. Natl. Acad. Sci. U.S.A.">
        <title>Genomic and metabolic adaptations of Methanobrevibacter smithii to the human gut.</title>
        <authorList>
            <person name="Samuel B.S."/>
            <person name="Hansen E.E."/>
            <person name="Manchester J.K."/>
            <person name="Coutinho P.M."/>
            <person name="Henrissat B."/>
            <person name="Fulton R."/>
            <person name="Latreille P."/>
            <person name="Kim K."/>
            <person name="Wilson R.K."/>
            <person name="Gordon J.I."/>
        </authorList>
    </citation>
    <scope>NUCLEOTIDE SEQUENCE [LARGE SCALE GENOMIC DNA]</scope>
    <source>
        <strain>ATCC 35061 / DSM 861 / OCM 144 / PS</strain>
    </source>
</reference>